<organism>
    <name type="scientific">Latilactobacillus sakei subsp. sakei (strain 23K)</name>
    <name type="common">Lactobacillus sakei subsp. sakei</name>
    <dbReference type="NCBI Taxonomy" id="314315"/>
    <lineage>
        <taxon>Bacteria</taxon>
        <taxon>Bacillati</taxon>
        <taxon>Bacillota</taxon>
        <taxon>Bacilli</taxon>
        <taxon>Lactobacillales</taxon>
        <taxon>Lactobacillaceae</taxon>
        <taxon>Latilactobacillus</taxon>
    </lineage>
</organism>
<comment type="function">
    <text evidence="1">One of the primary rRNA binding proteins, this protein initially binds near the 5'-end of the 23S rRNA. It is important during the early stages of 50S assembly. It makes multiple contacts with different domains of the 23S rRNA in the assembled 50S subunit and ribosome.</text>
</comment>
<comment type="function">
    <text evidence="1">Forms part of the polypeptide exit tunnel.</text>
</comment>
<comment type="subunit">
    <text evidence="1">Part of the 50S ribosomal subunit.</text>
</comment>
<comment type="similarity">
    <text evidence="1">Belongs to the universal ribosomal protein uL4 family.</text>
</comment>
<accession>Q38UR3</accession>
<sequence>MANVTLFKQDGSQNGNVELNDSIWAIEPNENVVFDAIIMQRASLRQGTHAVKNRSAVRGGGRKPWRQKGTGRARQGSIRSPQWRGGGVVFGPTPRSYSYKLPRKVRRLAIKSVLSQKVIDNDLIVVDSFSFDAPKTKEFAEVLNKLDVNTKVLVVLEDGNDFTALSARNLPNVTVVPADGINVLDVVGNQKLILTQAALSKIEEVLA</sequence>
<reference key="1">
    <citation type="journal article" date="2005" name="Nat. Biotechnol.">
        <title>The complete genome sequence of the meat-borne lactic acid bacterium Lactobacillus sakei 23K.</title>
        <authorList>
            <person name="Chaillou S."/>
            <person name="Champomier-Verges M.-C."/>
            <person name="Cornet M."/>
            <person name="Crutz-Le Coq A.-M."/>
            <person name="Dudez A.-M."/>
            <person name="Martin V."/>
            <person name="Beaufils S."/>
            <person name="Darbon-Rongere E."/>
            <person name="Bossy R."/>
            <person name="Loux V."/>
            <person name="Zagorec M."/>
        </authorList>
    </citation>
    <scope>NUCLEOTIDE SEQUENCE [LARGE SCALE GENOMIC DNA]</scope>
    <source>
        <strain>23K</strain>
    </source>
</reference>
<dbReference type="EMBL" id="CR936503">
    <property type="protein sequence ID" value="CAI56071.1"/>
    <property type="molecule type" value="Genomic_DNA"/>
</dbReference>
<dbReference type="RefSeq" id="WP_011375448.1">
    <property type="nucleotide sequence ID" value="NC_007576.1"/>
</dbReference>
<dbReference type="SMR" id="Q38UR3"/>
<dbReference type="STRING" id="314315.LCA_1763"/>
<dbReference type="GeneID" id="57132680"/>
<dbReference type="KEGG" id="lsa:LCA_1763"/>
<dbReference type="eggNOG" id="COG0088">
    <property type="taxonomic scope" value="Bacteria"/>
</dbReference>
<dbReference type="HOGENOM" id="CLU_041575_5_2_9"/>
<dbReference type="OrthoDB" id="9803201at2"/>
<dbReference type="Proteomes" id="UP000002707">
    <property type="component" value="Chromosome"/>
</dbReference>
<dbReference type="GO" id="GO:1990904">
    <property type="term" value="C:ribonucleoprotein complex"/>
    <property type="evidence" value="ECO:0007669"/>
    <property type="project" value="UniProtKB-KW"/>
</dbReference>
<dbReference type="GO" id="GO:0005840">
    <property type="term" value="C:ribosome"/>
    <property type="evidence" value="ECO:0007669"/>
    <property type="project" value="UniProtKB-KW"/>
</dbReference>
<dbReference type="GO" id="GO:0019843">
    <property type="term" value="F:rRNA binding"/>
    <property type="evidence" value="ECO:0007669"/>
    <property type="project" value="UniProtKB-UniRule"/>
</dbReference>
<dbReference type="GO" id="GO:0003735">
    <property type="term" value="F:structural constituent of ribosome"/>
    <property type="evidence" value="ECO:0007669"/>
    <property type="project" value="InterPro"/>
</dbReference>
<dbReference type="GO" id="GO:0006412">
    <property type="term" value="P:translation"/>
    <property type="evidence" value="ECO:0007669"/>
    <property type="project" value="UniProtKB-UniRule"/>
</dbReference>
<dbReference type="FunFam" id="3.40.1370.10:FF:000003">
    <property type="entry name" value="50S ribosomal protein L4"/>
    <property type="match status" value="1"/>
</dbReference>
<dbReference type="Gene3D" id="3.40.1370.10">
    <property type="match status" value="1"/>
</dbReference>
<dbReference type="HAMAP" id="MF_01328_B">
    <property type="entry name" value="Ribosomal_uL4_B"/>
    <property type="match status" value="1"/>
</dbReference>
<dbReference type="InterPro" id="IPR002136">
    <property type="entry name" value="Ribosomal_uL4"/>
</dbReference>
<dbReference type="InterPro" id="IPR013005">
    <property type="entry name" value="Ribosomal_uL4-like"/>
</dbReference>
<dbReference type="InterPro" id="IPR023574">
    <property type="entry name" value="Ribosomal_uL4_dom_sf"/>
</dbReference>
<dbReference type="NCBIfam" id="TIGR03953">
    <property type="entry name" value="rplD_bact"/>
    <property type="match status" value="1"/>
</dbReference>
<dbReference type="PANTHER" id="PTHR10746">
    <property type="entry name" value="50S RIBOSOMAL PROTEIN L4"/>
    <property type="match status" value="1"/>
</dbReference>
<dbReference type="PANTHER" id="PTHR10746:SF6">
    <property type="entry name" value="LARGE RIBOSOMAL SUBUNIT PROTEIN UL4M"/>
    <property type="match status" value="1"/>
</dbReference>
<dbReference type="Pfam" id="PF00573">
    <property type="entry name" value="Ribosomal_L4"/>
    <property type="match status" value="1"/>
</dbReference>
<dbReference type="SUPFAM" id="SSF52166">
    <property type="entry name" value="Ribosomal protein L4"/>
    <property type="match status" value="1"/>
</dbReference>
<gene>
    <name evidence="1" type="primary">rplD</name>
    <name type="ordered locus">LCA_1763</name>
</gene>
<keyword id="KW-1185">Reference proteome</keyword>
<keyword id="KW-0687">Ribonucleoprotein</keyword>
<keyword id="KW-0689">Ribosomal protein</keyword>
<keyword id="KW-0694">RNA-binding</keyword>
<keyword id="KW-0699">rRNA-binding</keyword>
<name>RL4_LATSS</name>
<evidence type="ECO:0000255" key="1">
    <source>
        <dbReference type="HAMAP-Rule" id="MF_01328"/>
    </source>
</evidence>
<evidence type="ECO:0000256" key="2">
    <source>
        <dbReference type="SAM" id="MobiDB-lite"/>
    </source>
</evidence>
<evidence type="ECO:0000305" key="3"/>
<feature type="chain" id="PRO_0000242386" description="Large ribosomal subunit protein uL4">
    <location>
        <begin position="1"/>
        <end position="207"/>
    </location>
</feature>
<feature type="region of interest" description="Disordered" evidence="2">
    <location>
        <begin position="49"/>
        <end position="78"/>
    </location>
</feature>
<feature type="compositionally biased region" description="Basic residues" evidence="2">
    <location>
        <begin position="60"/>
        <end position="71"/>
    </location>
</feature>
<protein>
    <recommendedName>
        <fullName evidence="1">Large ribosomal subunit protein uL4</fullName>
    </recommendedName>
    <alternativeName>
        <fullName evidence="3">50S ribosomal protein L4</fullName>
    </alternativeName>
</protein>
<proteinExistence type="inferred from homology"/>